<accession>Q46971</accession>
<accession>C3VUZ5</accession>
<sequence length="89" mass="8896">MRELDREELNCVGGAGDPLADPNSQIVRQIMSNAAWGAAFGARGGLGGMAVGAAGGVTQTVLQGAAAHMPVNVPIPKVPMGPSWNGSKG</sequence>
<gene>
    <name evidence="7" type="primary">mcnN</name>
    <name evidence="10" type="synonym">mtfS</name>
</gene>
<keyword id="KW-0044">Antibiotic</keyword>
<keyword id="KW-0929">Antimicrobial</keyword>
<keyword id="KW-0078">Bacteriocin</keyword>
<keyword id="KW-0903">Direct protein sequencing</keyword>
<keyword id="KW-0614">Plasmid</keyword>
<keyword id="KW-0964">Secreted</keyword>
<keyword id="KW-0732">Signal</keyword>
<keyword id="KW-0843">Virulence</keyword>
<dbReference type="EMBL" id="U47048">
    <property type="protein sequence ID" value="AAA88772.1"/>
    <property type="status" value="ALT_INIT"/>
    <property type="molecule type" value="Genomic_DNA"/>
</dbReference>
<dbReference type="EMBL" id="FJ895580">
    <property type="protein sequence ID" value="ACP43450.1"/>
    <property type="molecule type" value="Genomic_DNA"/>
</dbReference>
<dbReference type="RefSeq" id="WP_096965257.1">
    <property type="nucleotide sequence ID" value="NZ_JAIHKV010000019.1"/>
</dbReference>
<dbReference type="SMR" id="Q46971"/>
<dbReference type="TCDB" id="1.C.58.1.2">
    <property type="family name" value="the microcin e492/c24 (microcin e492) family"/>
</dbReference>
<dbReference type="GO" id="GO:0005576">
    <property type="term" value="C:extracellular region"/>
    <property type="evidence" value="ECO:0007669"/>
    <property type="project" value="UniProtKB-SubCell"/>
</dbReference>
<dbReference type="GO" id="GO:0042742">
    <property type="term" value="P:defense response to bacterium"/>
    <property type="evidence" value="ECO:0007669"/>
    <property type="project" value="UniProtKB-KW"/>
</dbReference>
<dbReference type="GO" id="GO:0031640">
    <property type="term" value="P:killing of cells of another organism"/>
    <property type="evidence" value="ECO:0007669"/>
    <property type="project" value="UniProtKB-KW"/>
</dbReference>
<name>MCNN_ECOLX</name>
<geneLocation type="plasmid" evidence="9">
    <name>p24-2</name>
</geneLocation>
<feature type="signal peptide" evidence="5">
    <location>
        <begin position="1"/>
        <end position="15"/>
    </location>
</feature>
<feature type="chain" id="PRO_0000005678" description="Microcin N">
    <location>
        <begin position="16"/>
        <end position="89"/>
    </location>
</feature>
<feature type="sequence conflict" description="In Ref. 1; AAA88772." evidence="11" ref="1">
    <original>AAFGARGGLG</original>
    <variation>PPLVPERFR</variation>
    <location>
        <begin position="38"/>
        <end position="47"/>
    </location>
</feature>
<evidence type="ECO:0000250" key="1">
    <source>
        <dbReference type="UniProtKB" id="Q9Z4N4"/>
    </source>
</evidence>
<evidence type="ECO:0000269" key="2">
    <source>
    </source>
</evidence>
<evidence type="ECO:0000269" key="3">
    <source>
    </source>
</evidence>
<evidence type="ECO:0000269" key="4">
    <source>
    </source>
</evidence>
<evidence type="ECO:0000269" key="5">
    <source>
    </source>
</evidence>
<evidence type="ECO:0000269" key="6">
    <source>
    </source>
</evidence>
<evidence type="ECO:0000303" key="7">
    <source>
    </source>
</evidence>
<evidence type="ECO:0000303" key="8">
    <source>
    </source>
</evidence>
<evidence type="ECO:0000303" key="9">
    <source>
    </source>
</evidence>
<evidence type="ECO:0000303" key="10">
    <source ref="1"/>
</evidence>
<evidence type="ECO:0000305" key="11"/>
<evidence type="ECO:0000305" key="12">
    <source>
    </source>
</evidence>
<evidence type="ECO:0000305" key="13">
    <source>
    </source>
</evidence>
<comment type="function">
    <text evidence="1 2 5 6 13">Active against E.coli and Salmonella, but not Listeria or Campylobacter (PubMed:10396637, PubMed:27190283, PubMed:8058821). Channel-forming microcin (By similarity). Probably neutralized by its immunity protein McnI (Probable).</text>
</comment>
<comment type="biophysicochemical properties">
    <temperatureDependence>
        <text evidence="4">Stable on heating to 80 degrees Celsius for 30 minutes, unstable at 100 degrees Celsius and to autoclaving.</text>
    </temperatureDependence>
</comment>
<comment type="subcellular location">
    <subcellularLocation>
        <location evidence="4 5">Secreted</location>
    </subcellularLocation>
</comment>
<comment type="induction">
    <text evidence="4">Induced during exponential growth in all media tested; activity remains in stationary phase, although expression varies depending on the growth medium (at protein level).</text>
</comment>
<comment type="PTM">
    <text evidence="5">Mass spectrometry suggests 3 of the 4 Met residues of the mature peptide are oxidized.</text>
</comment>
<comment type="mass spectrometry" mass="7274.23" method="MALDI" evidence="4"/>
<comment type="mass spectrometry" mass="7224.0" method="MALDI" evidence="5"/>
<comment type="biotechnology">
    <text evidence="2 3">When avirulent E.coli transformed with a plasmid encoding the genes necessary for microcin production, secretion and immunity is fed continuously to broiler chickens it significantly reduces the S.typhimurium load in the intestinal tract (PubMed:10396637). 44 of 57 reptile-derived Salmonella strains were sensitive in in vitro killing assays to the above strain, suggesting it might be used to reduce pet-acquired Salmonellosis (PubMed:11560267).</text>
</comment>
<comment type="similarity">
    <text evidence="12">Belongs to the class IIa microcin family.</text>
</comment>
<comment type="sequence caution" evidence="11">
    <conflict type="erroneous initiation">
        <sequence resource="EMBL-CDS" id="AAA88772"/>
    </conflict>
    <text>Extended N-terminus.</text>
</comment>
<proteinExistence type="evidence at protein level"/>
<organism>
    <name type="scientific">Escherichia coli</name>
    <dbReference type="NCBI Taxonomy" id="562"/>
    <lineage>
        <taxon>Bacteria</taxon>
        <taxon>Pseudomonadati</taxon>
        <taxon>Pseudomonadota</taxon>
        <taxon>Gammaproteobacteria</taxon>
        <taxon>Enterobacterales</taxon>
        <taxon>Enterobacteriaceae</taxon>
        <taxon>Escherichia</taxon>
    </lineage>
</organism>
<reference key="1">
    <citation type="submission" date="1996-01" db="EMBL/GenBank/DDBJ databases">
        <title>Complete nucleotide sequence of microcin 24 genetic region and analysis of a new ABC transporter.</title>
        <authorList>
            <person name="O'Brien G.J."/>
            <person name="Mahanty H.K."/>
        </authorList>
    </citation>
    <scope>NUCLEOTIDE SEQUENCE [GENOMIC DNA]</scope>
    <source>
        <strain>2424</strain>
    </source>
</reference>
<reference key="2">
    <citation type="journal article" date="2010" name="FEMS Microbiol. Lett.">
        <title>Purification and characterization of the antimicrobial peptide microcin N.</title>
        <authorList>
            <person name="Corsini G."/>
            <person name="Karahanian E."/>
            <person name="Tello M."/>
            <person name="Fernandez K."/>
            <person name="Rivero D."/>
            <person name="Saavedra J.M."/>
            <person name="Ferrer A."/>
        </authorList>
    </citation>
    <scope>NUCLEOTIDE SEQUENCE [GENOMIC DNA]</scope>
    <scope>SEQUENCE REVISION</scope>
    <scope>NOMENCLATURE</scope>
    <scope>BIOPHYSICOCHEMICAL PROPERTIES</scope>
    <scope>SUBCELLULAR LOCATION</scope>
    <scope>INDUCTION</scope>
    <scope>MASS SPECTROMETRY</scope>
    <source>
        <strain>2424</strain>
    </source>
</reference>
<reference key="3">
    <citation type="journal article" date="2016" name="FEMS Microbiol. Lett.">
        <title>Characterization of a highly potent antimicrobial peptide microcin N from uropathogenic Escherichia coli.</title>
        <authorList>
            <person name="Kaur K."/>
            <person name="Tarassova O."/>
            <person name="Dangeti R.V."/>
            <person name="Azmi S."/>
            <person name="Wishart D."/>
            <person name="McMullen L."/>
            <person name="Stiles M."/>
        </authorList>
    </citation>
    <scope>PROTEIN SEQUENCE OF 16-23</scope>
    <scope>FUNCTION</scope>
    <scope>SUBCELLULAR LOCATION</scope>
    <scope>MASS SPECTROMETRY</scope>
    <source>
        <strain>2424</strain>
    </source>
</reference>
<reference key="4">
    <citation type="journal article" date="1994" name="Plasmid">
        <title>Colicin 24, a new plasmid-borne colicin from a uropathogenic strain of Escherichia coli.</title>
        <authorList>
            <person name="O'Brien G.J."/>
            <person name="Mahanty H.K."/>
        </authorList>
    </citation>
    <scope>IDENTIFICATION</scope>
    <scope>FUNCTION</scope>
    <source>
        <strain>2424</strain>
        <plasmid>p24-2</plasmid>
    </source>
</reference>
<reference key="5">
    <citation type="journal article" date="1999" name="Avian Dis.">
        <title>Inhibition of Salmonella typhimurium in the chicken intestinal tract by a transformed avirulent avian Escherichia coli.</title>
        <authorList>
            <person name="Wooley R.E."/>
            <person name="Gibbs P.S."/>
            <person name="Shotts E.B. Jr."/>
        </authorList>
    </citation>
    <scope>FUNCTION</scope>
    <scope>BIOTECHNOLOGY</scope>
    <source>
        <strain>2424</strain>
    </source>
</reference>
<reference key="6">
    <citation type="journal article" date="2001" name="Am. J. Vet. Res.">
        <title>In vitro inhibition of Salmonella organisms isolated from reptiles by an inactivated culture of microcin-producing Escherichia coli.</title>
        <authorList>
            <person name="Wooley R.E."/>
            <person name="Ritchie B.W."/>
            <person name="Currin M.F."/>
            <person name="Chitwood S.W."/>
            <person name="Sanchez S."/>
            <person name="Crane M.M."/>
            <person name="Lamberski N."/>
        </authorList>
    </citation>
    <scope>FUNCTION</scope>
    <scope>BIOTECHNOLOGY</scope>
    <source>
        <strain>2424</strain>
    </source>
</reference>
<protein>
    <recommendedName>
        <fullName evidence="7 8">Microcin N</fullName>
    </recommendedName>
    <alternativeName>
        <fullName evidence="9">Colicin 24</fullName>
    </alternativeName>
    <alternativeName>
        <fullName evidence="10">Microcin-24</fullName>
        <shortName evidence="10">Mcc24</shortName>
    </alternativeName>
</protein>